<protein>
    <recommendedName>
        <fullName evidence="1">Tyrosine recombinase XerD</fullName>
    </recommendedName>
</protein>
<keyword id="KW-0131">Cell cycle</keyword>
<keyword id="KW-0132">Cell division</keyword>
<keyword id="KW-0159">Chromosome partition</keyword>
<keyword id="KW-0963">Cytoplasm</keyword>
<keyword id="KW-0229">DNA integration</keyword>
<keyword id="KW-0233">DNA recombination</keyword>
<keyword id="KW-0238">DNA-binding</keyword>
<gene>
    <name evidence="1" type="primary">xerD</name>
    <name type="ordered locus">NMA0964</name>
</gene>
<comment type="function">
    <text evidence="1">Site-specific tyrosine recombinase, which acts by catalyzing the cutting and rejoining of the recombining DNA molecules. The XerC-XerD complex is essential to convert dimers of the bacterial chromosome into monomers to permit their segregation at cell division. It also contributes to the segregational stability of plasmids.</text>
</comment>
<comment type="subunit">
    <text evidence="1">Forms a cyclic heterotetrameric complex composed of two molecules of XerC and two molecules of XerD.</text>
</comment>
<comment type="subcellular location">
    <subcellularLocation>
        <location evidence="1">Cytoplasm</location>
    </subcellularLocation>
</comment>
<comment type="similarity">
    <text evidence="1">Belongs to the 'phage' integrase family. XerD subfamily.</text>
</comment>
<name>XERD_NEIMA</name>
<dbReference type="EMBL" id="AL157959">
    <property type="protein sequence ID" value="CAM08188.1"/>
    <property type="molecule type" value="Genomic_DNA"/>
</dbReference>
<dbReference type="PIR" id="C81943">
    <property type="entry name" value="C81943"/>
</dbReference>
<dbReference type="RefSeq" id="WP_002246088.1">
    <property type="nucleotide sequence ID" value="NC_003116.1"/>
</dbReference>
<dbReference type="SMR" id="Q9JV76"/>
<dbReference type="EnsemblBacteria" id="CAM08188">
    <property type="protein sequence ID" value="CAM08188"/>
    <property type="gene ID" value="NMA0964"/>
</dbReference>
<dbReference type="GeneID" id="93386418"/>
<dbReference type="KEGG" id="nma:NMA0964"/>
<dbReference type="HOGENOM" id="CLU_027562_9_0_4"/>
<dbReference type="Proteomes" id="UP000000626">
    <property type="component" value="Chromosome"/>
</dbReference>
<dbReference type="GO" id="GO:0005737">
    <property type="term" value="C:cytoplasm"/>
    <property type="evidence" value="ECO:0007669"/>
    <property type="project" value="UniProtKB-SubCell"/>
</dbReference>
<dbReference type="GO" id="GO:0003677">
    <property type="term" value="F:DNA binding"/>
    <property type="evidence" value="ECO:0007669"/>
    <property type="project" value="UniProtKB-KW"/>
</dbReference>
<dbReference type="GO" id="GO:0009037">
    <property type="term" value="F:tyrosine-based site-specific recombinase activity"/>
    <property type="evidence" value="ECO:0007669"/>
    <property type="project" value="UniProtKB-UniRule"/>
</dbReference>
<dbReference type="GO" id="GO:0051301">
    <property type="term" value="P:cell division"/>
    <property type="evidence" value="ECO:0007669"/>
    <property type="project" value="UniProtKB-KW"/>
</dbReference>
<dbReference type="GO" id="GO:0007059">
    <property type="term" value="P:chromosome segregation"/>
    <property type="evidence" value="ECO:0007669"/>
    <property type="project" value="UniProtKB-UniRule"/>
</dbReference>
<dbReference type="GO" id="GO:0006313">
    <property type="term" value="P:DNA transposition"/>
    <property type="evidence" value="ECO:0007669"/>
    <property type="project" value="UniProtKB-UniRule"/>
</dbReference>
<dbReference type="CDD" id="cd00798">
    <property type="entry name" value="INT_XerDC_C"/>
    <property type="match status" value="1"/>
</dbReference>
<dbReference type="Gene3D" id="1.10.150.130">
    <property type="match status" value="1"/>
</dbReference>
<dbReference type="Gene3D" id="1.10.443.10">
    <property type="entry name" value="Intergrase catalytic core"/>
    <property type="match status" value="1"/>
</dbReference>
<dbReference type="HAMAP" id="MF_01808">
    <property type="entry name" value="Recomb_XerC_XerD"/>
    <property type="match status" value="1"/>
</dbReference>
<dbReference type="HAMAP" id="MF_01807">
    <property type="entry name" value="Recomb_XerD"/>
    <property type="match status" value="1"/>
</dbReference>
<dbReference type="InterPro" id="IPR044068">
    <property type="entry name" value="CB"/>
</dbReference>
<dbReference type="InterPro" id="IPR011010">
    <property type="entry name" value="DNA_brk_join_enz"/>
</dbReference>
<dbReference type="InterPro" id="IPR013762">
    <property type="entry name" value="Integrase-like_cat_sf"/>
</dbReference>
<dbReference type="InterPro" id="IPR002104">
    <property type="entry name" value="Integrase_catalytic"/>
</dbReference>
<dbReference type="InterPro" id="IPR010998">
    <property type="entry name" value="Integrase_recombinase_N"/>
</dbReference>
<dbReference type="InterPro" id="IPR004107">
    <property type="entry name" value="Integrase_SAM-like_N"/>
</dbReference>
<dbReference type="InterPro" id="IPR011932">
    <property type="entry name" value="Recomb_XerD"/>
</dbReference>
<dbReference type="InterPro" id="IPR023009">
    <property type="entry name" value="Tyrosine_recombinase_XerC/XerD"/>
</dbReference>
<dbReference type="InterPro" id="IPR050090">
    <property type="entry name" value="Tyrosine_recombinase_XerCD"/>
</dbReference>
<dbReference type="NCBIfam" id="NF001399">
    <property type="entry name" value="PRK00283.1"/>
    <property type="match status" value="1"/>
</dbReference>
<dbReference type="NCBIfam" id="TIGR02225">
    <property type="entry name" value="recomb_XerD"/>
    <property type="match status" value="1"/>
</dbReference>
<dbReference type="PANTHER" id="PTHR30349">
    <property type="entry name" value="PHAGE INTEGRASE-RELATED"/>
    <property type="match status" value="1"/>
</dbReference>
<dbReference type="PANTHER" id="PTHR30349:SF90">
    <property type="entry name" value="TYROSINE RECOMBINASE XERD"/>
    <property type="match status" value="1"/>
</dbReference>
<dbReference type="Pfam" id="PF02899">
    <property type="entry name" value="Phage_int_SAM_1"/>
    <property type="match status" value="1"/>
</dbReference>
<dbReference type="Pfam" id="PF00589">
    <property type="entry name" value="Phage_integrase"/>
    <property type="match status" value="1"/>
</dbReference>
<dbReference type="SUPFAM" id="SSF56349">
    <property type="entry name" value="DNA breaking-rejoining enzymes"/>
    <property type="match status" value="1"/>
</dbReference>
<dbReference type="SUPFAM" id="SSF47823">
    <property type="entry name" value="lambda integrase-like, N-terminal domain"/>
    <property type="match status" value="1"/>
</dbReference>
<dbReference type="PROSITE" id="PS51900">
    <property type="entry name" value="CB"/>
    <property type="match status" value="1"/>
</dbReference>
<dbReference type="PROSITE" id="PS51898">
    <property type="entry name" value="TYR_RECOMBINASE"/>
    <property type="match status" value="1"/>
</dbReference>
<feature type="chain" id="PRO_0000095400" description="Tyrosine recombinase XerD">
    <location>
        <begin position="1"/>
        <end position="291"/>
    </location>
</feature>
<feature type="domain" description="Core-binding (CB)" evidence="3">
    <location>
        <begin position="1"/>
        <end position="82"/>
    </location>
</feature>
<feature type="domain" description="Tyr recombinase" evidence="2">
    <location>
        <begin position="103"/>
        <end position="285"/>
    </location>
</feature>
<feature type="active site" evidence="1">
    <location>
        <position position="143"/>
    </location>
</feature>
<feature type="active site" evidence="1">
    <location>
        <position position="167"/>
    </location>
</feature>
<feature type="active site" evidence="1">
    <location>
        <position position="237"/>
    </location>
</feature>
<feature type="active site" evidence="1">
    <location>
        <position position="240"/>
    </location>
</feature>
<feature type="active site" evidence="1">
    <location>
        <position position="263"/>
    </location>
</feature>
<feature type="active site" description="O-(3'-phospho-DNA)-tyrosine intermediate" evidence="1">
    <location>
        <position position="272"/>
    </location>
</feature>
<accession>Q9JV76</accession>
<accession>A1IR04</accession>
<organism>
    <name type="scientific">Neisseria meningitidis serogroup A / serotype 4A (strain DSM 15465 / Z2491)</name>
    <dbReference type="NCBI Taxonomy" id="122587"/>
    <lineage>
        <taxon>Bacteria</taxon>
        <taxon>Pseudomonadati</taxon>
        <taxon>Pseudomonadota</taxon>
        <taxon>Betaproteobacteria</taxon>
        <taxon>Neisseriales</taxon>
        <taxon>Neisseriaceae</taxon>
        <taxon>Neisseria</taxon>
    </lineage>
</organism>
<proteinExistence type="inferred from homology"/>
<evidence type="ECO:0000255" key="1">
    <source>
        <dbReference type="HAMAP-Rule" id="MF_01807"/>
    </source>
</evidence>
<evidence type="ECO:0000255" key="2">
    <source>
        <dbReference type="PROSITE-ProRule" id="PRU01246"/>
    </source>
</evidence>
<evidence type="ECO:0000255" key="3">
    <source>
        <dbReference type="PROSITE-ProRule" id="PRU01248"/>
    </source>
</evidence>
<reference key="1">
    <citation type="journal article" date="2000" name="Nature">
        <title>Complete DNA sequence of a serogroup A strain of Neisseria meningitidis Z2491.</title>
        <authorList>
            <person name="Parkhill J."/>
            <person name="Achtman M."/>
            <person name="James K.D."/>
            <person name="Bentley S.D."/>
            <person name="Churcher C.M."/>
            <person name="Klee S.R."/>
            <person name="Morelli G."/>
            <person name="Basham D."/>
            <person name="Brown D."/>
            <person name="Chillingworth T."/>
            <person name="Davies R.M."/>
            <person name="Davis P."/>
            <person name="Devlin K."/>
            <person name="Feltwell T."/>
            <person name="Hamlin N."/>
            <person name="Holroyd S."/>
            <person name="Jagels K."/>
            <person name="Leather S."/>
            <person name="Moule S."/>
            <person name="Mungall K.L."/>
            <person name="Quail M.A."/>
            <person name="Rajandream M.A."/>
            <person name="Rutherford K.M."/>
            <person name="Simmonds M."/>
            <person name="Skelton J."/>
            <person name="Whitehead S."/>
            <person name="Spratt B.G."/>
            <person name="Barrell B.G."/>
        </authorList>
    </citation>
    <scope>NUCLEOTIDE SEQUENCE [LARGE SCALE GENOMIC DNA]</scope>
    <source>
        <strain>DSM 15465 / Z2491</strain>
    </source>
</reference>
<sequence length="291" mass="32833">MEEGLIDRLLETLWLDRRLNQNTLNGYRRDLEKIARRLSQSGRMLKDADEADLAAAVYVDGEQRSSQARALSACKRLYIWMEREGIRTDNPTRLLKPPKIDKNIPTLITEQQISRLLAAPDTDTPHGLRDKALLELMYATGLRVSEAVGLNFGNVDLDRGCITALGKGDKQRMVPMGQESAYWVGRYYTEARPALLKGRSCDALFVSQKKTGISRQLAWMIVKEYASQAGIGHISPHSLRHAFATHLVQHGLDLRVVQDMLGHADLNTTQIYTHVANVWLQGVVKEHHSRN</sequence>